<name>AT2A3_RAT</name>
<reference key="1">
    <citation type="journal article" date="1989" name="J. Biol. Chem.">
        <title>cDNA cloning, functional expression, and mRNA tissue distribution of a third organellar Ca2+ pump.</title>
        <authorList>
            <person name="Burk S.E."/>
            <person name="Lytton J."/>
            <person name="McLennan D.H."/>
            <person name="Shull G.E."/>
        </authorList>
    </citation>
    <scope>NUCLEOTIDE SEQUENCE [MRNA] (ISOFORM SERCA3A)</scope>
    <scope>CHARACTERIZATION</scope>
    <scope>TISSUE SPECIFICITY</scope>
    <source>
        <tissue>Kidney</tissue>
    </source>
</reference>
<reference key="2">
    <citation type="journal article" date="2000" name="Hypertension">
        <title>Platelet Ca(2+)ATPases: a plural, species-specific, and multiple hypertension-regulated expression system.</title>
        <authorList>
            <person name="Martin V."/>
            <person name="Bredoux R."/>
            <person name="Corvazier E."/>
            <person name="Papp B."/>
            <person name="Enouf J."/>
        </authorList>
    </citation>
    <scope>NUCLEOTIDE SEQUENCE [MRNA] OF 869-999 (ISOFORM SERCA3BC)</scope>
    <scope>FUNCTION</scope>
    <scope>TISSUE SPECIFICITY</scope>
    <scope>INDUCTION</scope>
    <source>
        <strain>Wistar Kyoto</strain>
    </source>
</reference>
<proteinExistence type="evidence at protein level"/>
<feature type="chain" id="PRO_0000046205" description="Sarcoplasmic/endoplasmic reticulum calcium ATPase 3">
    <location>
        <begin position="1"/>
        <end position="999"/>
    </location>
</feature>
<feature type="topological domain" description="Cytoplasmic" evidence="1">
    <location>
        <begin position="1"/>
        <end position="48"/>
    </location>
</feature>
<feature type="transmembrane region" description="Helical; Name=1" evidence="1">
    <location>
        <begin position="49"/>
        <end position="69"/>
    </location>
</feature>
<feature type="topological domain" description="Lumenal" evidence="1">
    <location>
        <begin position="70"/>
        <end position="89"/>
    </location>
</feature>
<feature type="transmembrane region" description="Helical; Name=2" evidence="1">
    <location>
        <begin position="90"/>
        <end position="110"/>
    </location>
</feature>
<feature type="topological domain" description="Cytoplasmic" evidence="1">
    <location>
        <begin position="111"/>
        <end position="253"/>
    </location>
</feature>
<feature type="transmembrane region" description="Helical; Name=3" evidence="1">
    <location>
        <begin position="254"/>
        <end position="273"/>
    </location>
</feature>
<feature type="topological domain" description="Lumenal" evidence="1">
    <location>
        <begin position="274"/>
        <end position="295"/>
    </location>
</feature>
<feature type="transmembrane region" description="Helical; Name=4" evidence="1">
    <location>
        <begin position="296"/>
        <end position="313"/>
    </location>
</feature>
<feature type="topological domain" description="Cytoplasmic" evidence="1">
    <location>
        <begin position="314"/>
        <end position="757"/>
    </location>
</feature>
<feature type="transmembrane region" description="Helical; Name=5" evidence="1">
    <location>
        <begin position="758"/>
        <end position="777"/>
    </location>
</feature>
<feature type="topological domain" description="Lumenal" evidence="1">
    <location>
        <begin position="778"/>
        <end position="787"/>
    </location>
</feature>
<feature type="transmembrane region" description="Helical; Name=6" evidence="1">
    <location>
        <begin position="788"/>
        <end position="808"/>
    </location>
</feature>
<feature type="topological domain" description="Cytoplasmic" evidence="1">
    <location>
        <begin position="809"/>
        <end position="828"/>
    </location>
</feature>
<feature type="transmembrane region" description="Helical; Name=7" evidence="1">
    <location>
        <begin position="829"/>
        <end position="851"/>
    </location>
</feature>
<feature type="topological domain" description="Lumenal" evidence="1">
    <location>
        <begin position="852"/>
        <end position="897"/>
    </location>
</feature>
<feature type="transmembrane region" description="Helical; Name=8" evidence="1">
    <location>
        <begin position="898"/>
        <end position="917"/>
    </location>
</feature>
<feature type="topological domain" description="Cytoplasmic" evidence="1">
    <location>
        <begin position="918"/>
        <end position="930"/>
    </location>
</feature>
<feature type="transmembrane region" description="Helical; Name=9" evidence="1">
    <location>
        <begin position="931"/>
        <end position="949"/>
    </location>
</feature>
<feature type="topological domain" description="Lumenal" evidence="1">
    <location>
        <begin position="950"/>
        <end position="964"/>
    </location>
</feature>
<feature type="transmembrane region" description="Helical; Name=10" evidence="1">
    <location>
        <begin position="965"/>
        <end position="985"/>
    </location>
</feature>
<feature type="topological domain" description="Cytoplasmic" evidence="1">
    <location>
        <begin position="986"/>
        <end position="999"/>
    </location>
</feature>
<feature type="region of interest" description="Interaction with phospholamban 1" evidence="1">
    <location>
        <begin position="370"/>
        <end position="400"/>
    </location>
</feature>
<feature type="region of interest" description="Interaction with phospholamban 2" evidence="1">
    <location>
        <begin position="788"/>
        <end position="808"/>
    </location>
</feature>
<feature type="active site" description="4-aspartylphosphate intermediate" evidence="1">
    <location>
        <position position="351"/>
    </location>
</feature>
<feature type="binding site" evidence="1">
    <location>
        <position position="304"/>
    </location>
    <ligand>
        <name>Ca(2+)</name>
        <dbReference type="ChEBI" id="CHEBI:29108"/>
        <label>2</label>
    </ligand>
</feature>
<feature type="binding site" evidence="1">
    <location>
        <position position="305"/>
    </location>
    <ligand>
        <name>Ca(2+)</name>
        <dbReference type="ChEBI" id="CHEBI:29108"/>
        <label>2</label>
    </ligand>
</feature>
<feature type="binding site" evidence="1">
    <location>
        <position position="307"/>
    </location>
    <ligand>
        <name>Ca(2+)</name>
        <dbReference type="ChEBI" id="CHEBI:29108"/>
        <label>2</label>
    </ligand>
</feature>
<feature type="binding site" evidence="1">
    <location>
        <position position="309"/>
    </location>
    <ligand>
        <name>Ca(2+)</name>
        <dbReference type="ChEBI" id="CHEBI:29108"/>
        <label>2</label>
    </ligand>
</feature>
<feature type="binding site" evidence="1">
    <location>
        <position position="351"/>
    </location>
    <ligand>
        <name>Mg(2+)</name>
        <dbReference type="ChEBI" id="CHEBI:18420"/>
    </ligand>
</feature>
<feature type="binding site" evidence="1">
    <location>
        <position position="353"/>
    </location>
    <ligand>
        <name>ATP</name>
        <dbReference type="ChEBI" id="CHEBI:30616"/>
    </ligand>
</feature>
<feature type="binding site" evidence="1">
    <location>
        <position position="353"/>
    </location>
    <ligand>
        <name>Mg(2+)</name>
        <dbReference type="ChEBI" id="CHEBI:18420"/>
    </ligand>
</feature>
<feature type="binding site" evidence="1">
    <location>
        <position position="442"/>
    </location>
    <ligand>
        <name>ATP</name>
        <dbReference type="ChEBI" id="CHEBI:30616"/>
    </ligand>
</feature>
<feature type="binding site" evidence="1">
    <location>
        <position position="489"/>
    </location>
    <ligand>
        <name>ATP</name>
        <dbReference type="ChEBI" id="CHEBI:30616"/>
    </ligand>
</feature>
<feature type="binding site" evidence="1">
    <location>
        <position position="515"/>
    </location>
    <ligand>
        <name>ATP</name>
        <dbReference type="ChEBI" id="CHEBI:30616"/>
    </ligand>
</feature>
<feature type="binding site" evidence="1">
    <location>
        <position position="560"/>
    </location>
    <ligand>
        <name>ATP</name>
        <dbReference type="ChEBI" id="CHEBI:30616"/>
    </ligand>
</feature>
<feature type="binding site" evidence="1">
    <location>
        <position position="625"/>
    </location>
    <ligand>
        <name>ATP</name>
        <dbReference type="ChEBI" id="CHEBI:30616"/>
    </ligand>
</feature>
<feature type="binding site" evidence="1">
    <location>
        <position position="626"/>
    </location>
    <ligand>
        <name>ATP</name>
        <dbReference type="ChEBI" id="CHEBI:30616"/>
    </ligand>
</feature>
<feature type="binding site" evidence="1">
    <location>
        <position position="627"/>
    </location>
    <ligand>
        <name>ATP</name>
        <dbReference type="ChEBI" id="CHEBI:30616"/>
    </ligand>
</feature>
<feature type="binding site" evidence="1">
    <location>
        <position position="678"/>
    </location>
    <ligand>
        <name>ATP</name>
        <dbReference type="ChEBI" id="CHEBI:30616"/>
    </ligand>
</feature>
<feature type="binding site" evidence="1">
    <location>
        <position position="684"/>
    </location>
    <ligand>
        <name>ATP</name>
        <dbReference type="ChEBI" id="CHEBI:30616"/>
    </ligand>
</feature>
<feature type="binding site" evidence="1">
    <location>
        <position position="703"/>
    </location>
    <ligand>
        <name>Mg(2+)</name>
        <dbReference type="ChEBI" id="CHEBI:18420"/>
    </ligand>
</feature>
<feature type="binding site" evidence="1">
    <location>
        <position position="706"/>
    </location>
    <ligand>
        <name>ATP</name>
        <dbReference type="ChEBI" id="CHEBI:30616"/>
    </ligand>
</feature>
<feature type="binding site" evidence="1">
    <location>
        <position position="768"/>
    </location>
    <ligand>
        <name>Ca(2+)</name>
        <dbReference type="ChEBI" id="CHEBI:29108"/>
        <label>1</label>
    </ligand>
</feature>
<feature type="binding site" evidence="1">
    <location>
        <position position="771"/>
    </location>
    <ligand>
        <name>Ca(2+)</name>
        <dbReference type="ChEBI" id="CHEBI:29108"/>
        <label>1</label>
    </ligand>
</feature>
<feature type="binding site" evidence="1">
    <location>
        <position position="796"/>
    </location>
    <ligand>
        <name>Ca(2+)</name>
        <dbReference type="ChEBI" id="CHEBI:29108"/>
        <label>2</label>
    </ligand>
</feature>
<feature type="binding site" evidence="1">
    <location>
        <position position="799"/>
    </location>
    <ligand>
        <name>Ca(2+)</name>
        <dbReference type="ChEBI" id="CHEBI:29108"/>
        <label>1</label>
    </ligand>
</feature>
<feature type="binding site" evidence="1">
    <location>
        <position position="800"/>
    </location>
    <ligand>
        <name>Ca(2+)</name>
        <dbReference type="ChEBI" id="CHEBI:29108"/>
        <label>1</label>
    </ligand>
</feature>
<feature type="binding site" evidence="1">
    <location>
        <position position="800"/>
    </location>
    <ligand>
        <name>Ca(2+)</name>
        <dbReference type="ChEBI" id="CHEBI:29108"/>
        <label>2</label>
    </ligand>
</feature>
<feature type="binding site" evidence="1">
    <location>
        <position position="908"/>
    </location>
    <ligand>
        <name>Ca(2+)</name>
        <dbReference type="ChEBI" id="CHEBI:29108"/>
        <label>1</label>
    </ligand>
</feature>
<feature type="modified residue" description="N-acetylmethionine" evidence="4">
    <location>
        <position position="1"/>
    </location>
</feature>
<feature type="modified residue" description="Phosphoserine" evidence="2">
    <location>
        <position position="17"/>
    </location>
</feature>
<feature type="modified residue" description="Phosphothreonine" evidence="2">
    <location>
        <position position="19"/>
    </location>
</feature>
<feature type="modified residue" description="Phosphothreonine" evidence="2">
    <location>
        <position position="415"/>
    </location>
</feature>
<feature type="modified residue" description="Phosphoserine" evidence="4">
    <location>
        <position position="662"/>
    </location>
</feature>
<feature type="splice variant" id="VSP_060852" description="In isoform SERCA3BC." evidence="7">
    <original>EKKDLK</original>
    <variation>GVLETFMQAWCKQPLPGPHTTRGWLPGCHFNGWEQTEEFVFIQERWTVSGLGPEKKARERLGLVSAAS</variation>
    <location>
        <begin position="994"/>
        <end position="999"/>
    </location>
</feature>
<comment type="function">
    <text evidence="5">This magnesium-dependent enzyme catalyzes the hydrolysis of ATP coupled with the transport of the calcium. Transports calcium ions from the cytosol into the sarcoplasmic/endoplasmic reticulum lumen. Contributes to calcium sequestration involved in muscular excitation/contraction.</text>
</comment>
<comment type="function">
    <text evidence="4">This magnesium-dependent enzyme catalyzes the hydrolysis of ATP coupled with the transport of calcium. Transports calcium ions from the cytosol into the sarcoplasmic/endoplasmic reticulum lumen. Contributes to calcium sequestration involved in muscular excitation/contraction.</text>
</comment>
<comment type="catalytic activity">
    <reaction evidence="4">
        <text>Ca(2+)(in) + ATP + H2O = Ca(2+)(out) + ADP + phosphate + H(+)</text>
        <dbReference type="Rhea" id="RHEA:18105"/>
        <dbReference type="ChEBI" id="CHEBI:15377"/>
        <dbReference type="ChEBI" id="CHEBI:15378"/>
        <dbReference type="ChEBI" id="CHEBI:29108"/>
        <dbReference type="ChEBI" id="CHEBI:30616"/>
        <dbReference type="ChEBI" id="CHEBI:43474"/>
        <dbReference type="ChEBI" id="CHEBI:456216"/>
        <dbReference type="EC" id="7.2.2.10"/>
    </reaction>
    <physiologicalReaction direction="left-to-right" evidence="4">
        <dbReference type="Rhea" id="RHEA:18106"/>
    </physiologicalReaction>
</comment>
<comment type="cofactor">
    <cofactor evidence="1">
        <name>Mg(2+)</name>
        <dbReference type="ChEBI" id="CHEBI:18420"/>
    </cofactor>
</comment>
<comment type="activity regulation">
    <text evidence="1 3">Inhibited by sarcolipin (SLN), phospholamban (PLN) and myoregulin (MRLN) (By similarity). Enhanced by DWORF; DWORF increases activity by displacing sarcolipin (SLN), phospholamban (PLN) and myoregulin (MRLN) (By similarity).</text>
</comment>
<comment type="subunit">
    <text evidence="1 3 4">Interacts with sarcolipin (SLN) (By similarity). Interacts with phospholamban (PLN) (By similarity). Interacts with myoregulin (MRLN). Interacts with DWORF (By similarity). Interacts with VMP1 (By similarity). Interacts with TUNAR; the interaction occurs at low levels in low glucose conditions and is increased by high glucose levels (By similarity).</text>
</comment>
<comment type="subcellular location">
    <subcellularLocation>
        <location evidence="4">Endoplasmic reticulum membrane</location>
        <topology evidence="4">Multi-pass membrane protein</topology>
    </subcellularLocation>
    <subcellularLocation>
        <location evidence="4">Sarcoplasmic reticulum membrane</location>
        <topology evidence="4">Multi-pass membrane protein</topology>
    </subcellularLocation>
</comment>
<comment type="alternative products">
    <event type="alternative splicing"/>
    <isoform>
        <id>P18596-2</id>
        <name>SERCA3A</name>
        <sequence type="displayed"/>
    </isoform>
    <isoform>
        <id>P18596-1</id>
        <name>SERCA3BC</name>
        <sequence type="described" ref="VSP_060852"/>
    </isoform>
</comment>
<comment type="tissue specificity">
    <text evidence="5 6">Found in most tissues. Most abundant in large and small intestine, spleen and lung. Also detected in PC12 cells.</text>
</comment>
<comment type="induction">
    <molecule>Isoform SERCA3BC</molecule>
    <text evidence="5">Down-regulated in all tissues except pancreas in a rat hypertension model.</text>
</comment>
<comment type="similarity">
    <text evidence="7">Belongs to the cation transport ATPase (P-type) (TC 3.A.3) family. Type IIA subfamily.</text>
</comment>
<evidence type="ECO:0000250" key="1">
    <source>
        <dbReference type="UniProtKB" id="P04191"/>
    </source>
</evidence>
<evidence type="ECO:0000250" key="2">
    <source>
        <dbReference type="UniProtKB" id="Q64518"/>
    </source>
</evidence>
<evidence type="ECO:0000250" key="3">
    <source>
        <dbReference type="UniProtKB" id="Q8R429"/>
    </source>
</evidence>
<evidence type="ECO:0000250" key="4">
    <source>
        <dbReference type="UniProtKB" id="Q93084"/>
    </source>
</evidence>
<evidence type="ECO:0000269" key="5">
    <source>
    </source>
</evidence>
<evidence type="ECO:0000269" key="6">
    <source>
    </source>
</evidence>
<evidence type="ECO:0000305" key="7"/>
<organism>
    <name type="scientific">Rattus norvegicus</name>
    <name type="common">Rat</name>
    <dbReference type="NCBI Taxonomy" id="10116"/>
    <lineage>
        <taxon>Eukaryota</taxon>
        <taxon>Metazoa</taxon>
        <taxon>Chordata</taxon>
        <taxon>Craniata</taxon>
        <taxon>Vertebrata</taxon>
        <taxon>Euteleostomi</taxon>
        <taxon>Mammalia</taxon>
        <taxon>Eutheria</taxon>
        <taxon>Euarchontoglires</taxon>
        <taxon>Glires</taxon>
        <taxon>Rodentia</taxon>
        <taxon>Myomorpha</taxon>
        <taxon>Muroidea</taxon>
        <taxon>Muridae</taxon>
        <taxon>Murinae</taxon>
        <taxon>Rattus</taxon>
    </lineage>
</organism>
<dbReference type="EC" id="7.2.2.10"/>
<dbReference type="EMBL" id="M30581">
    <property type="protein sequence ID" value="AAA42131.1"/>
    <property type="molecule type" value="mRNA"/>
</dbReference>
<dbReference type="EMBL" id="AF458230">
    <property type="protein sequence ID" value="AAL78969.1"/>
    <property type="molecule type" value="mRNA"/>
</dbReference>
<dbReference type="PIR" id="A34307">
    <property type="entry name" value="A34307"/>
</dbReference>
<dbReference type="RefSeq" id="NP_037046.1">
    <molecule id="P18596-2"/>
    <property type="nucleotide sequence ID" value="NM_012914.1"/>
</dbReference>
<dbReference type="SMR" id="P18596"/>
<dbReference type="BioGRID" id="247429">
    <property type="interactions" value="3"/>
</dbReference>
<dbReference type="FunCoup" id="P18596">
    <property type="interactions" value="863"/>
</dbReference>
<dbReference type="IntAct" id="P18596">
    <property type="interactions" value="1"/>
</dbReference>
<dbReference type="STRING" id="10116.ENSRNOP00000060212"/>
<dbReference type="iPTMnet" id="P18596"/>
<dbReference type="PhosphoSitePlus" id="P18596"/>
<dbReference type="jPOST" id="P18596"/>
<dbReference type="PaxDb" id="10116-ENSRNOP00000060212"/>
<dbReference type="GeneID" id="25391"/>
<dbReference type="KEGG" id="rno:25391"/>
<dbReference type="AGR" id="RGD:2175"/>
<dbReference type="CTD" id="489"/>
<dbReference type="RGD" id="2175">
    <property type="gene designation" value="Atp2a3"/>
</dbReference>
<dbReference type="eggNOG" id="KOG0202">
    <property type="taxonomic scope" value="Eukaryota"/>
</dbReference>
<dbReference type="InParanoid" id="P18596"/>
<dbReference type="Reactome" id="R-RNO-418359">
    <property type="pathway name" value="Reduction of cytosolic Ca++ levels"/>
</dbReference>
<dbReference type="Reactome" id="R-RNO-5578775">
    <property type="pathway name" value="Ion homeostasis"/>
</dbReference>
<dbReference type="Reactome" id="R-RNO-936837">
    <property type="pathway name" value="Ion transport by P-type ATPases"/>
</dbReference>
<dbReference type="PRO" id="PR:P18596"/>
<dbReference type="Proteomes" id="UP000002494">
    <property type="component" value="Unplaced"/>
</dbReference>
<dbReference type="GO" id="GO:0005783">
    <property type="term" value="C:endoplasmic reticulum"/>
    <property type="evidence" value="ECO:0000266"/>
    <property type="project" value="RGD"/>
</dbReference>
<dbReference type="GO" id="GO:0016020">
    <property type="term" value="C:membrane"/>
    <property type="evidence" value="ECO:0000318"/>
    <property type="project" value="GO_Central"/>
</dbReference>
<dbReference type="GO" id="GO:0031090">
    <property type="term" value="C:organelle membrane"/>
    <property type="evidence" value="ECO:0000266"/>
    <property type="project" value="RGD"/>
</dbReference>
<dbReference type="GO" id="GO:0016529">
    <property type="term" value="C:sarcoplasmic reticulum"/>
    <property type="evidence" value="ECO:0000266"/>
    <property type="project" value="RGD"/>
</dbReference>
<dbReference type="GO" id="GO:0033017">
    <property type="term" value="C:sarcoplasmic reticulum membrane"/>
    <property type="evidence" value="ECO:0007669"/>
    <property type="project" value="UniProtKB-SubCell"/>
</dbReference>
<dbReference type="GO" id="GO:0005524">
    <property type="term" value="F:ATP binding"/>
    <property type="evidence" value="ECO:0007669"/>
    <property type="project" value="UniProtKB-KW"/>
</dbReference>
<dbReference type="GO" id="GO:0016887">
    <property type="term" value="F:ATP hydrolysis activity"/>
    <property type="evidence" value="ECO:0007669"/>
    <property type="project" value="InterPro"/>
</dbReference>
<dbReference type="GO" id="GO:0015085">
    <property type="term" value="F:calcium ion transmembrane transporter activity"/>
    <property type="evidence" value="ECO:0000314"/>
    <property type="project" value="ARUK-UCL"/>
</dbReference>
<dbReference type="GO" id="GO:0030899">
    <property type="term" value="F:calcium-dependent ATPase activity"/>
    <property type="evidence" value="ECO:0000314"/>
    <property type="project" value="ARUK-UCL"/>
</dbReference>
<dbReference type="GO" id="GO:0008656">
    <property type="term" value="F:cysteine-type endopeptidase activator activity involved in apoptotic process"/>
    <property type="evidence" value="ECO:0000266"/>
    <property type="project" value="RGD"/>
</dbReference>
<dbReference type="GO" id="GO:0046872">
    <property type="term" value="F:metal ion binding"/>
    <property type="evidence" value="ECO:0007669"/>
    <property type="project" value="UniProtKB-KW"/>
</dbReference>
<dbReference type="GO" id="GO:0005388">
    <property type="term" value="F:P-type calcium transporter activity"/>
    <property type="evidence" value="ECO:0000314"/>
    <property type="project" value="ARUK-UCL"/>
</dbReference>
<dbReference type="GO" id="GO:0044325">
    <property type="term" value="F:transmembrane transporter binding"/>
    <property type="evidence" value="ECO:0000266"/>
    <property type="project" value="RGD"/>
</dbReference>
<dbReference type="GO" id="GO:0070588">
    <property type="term" value="P:calcium ion transmembrane transport"/>
    <property type="evidence" value="ECO:0000314"/>
    <property type="project" value="ARUK-UCL"/>
</dbReference>
<dbReference type="GO" id="GO:1903515">
    <property type="term" value="P:calcium ion transport from cytosol to endoplasmic reticulum"/>
    <property type="evidence" value="ECO:0000266"/>
    <property type="project" value="RGD"/>
</dbReference>
<dbReference type="GO" id="GO:0032469">
    <property type="term" value="P:endoplasmic reticulum calcium ion homeostasis"/>
    <property type="evidence" value="ECO:0000314"/>
    <property type="project" value="RGD"/>
</dbReference>
<dbReference type="GO" id="GO:0006874">
    <property type="term" value="P:intracellular calcium ion homeostasis"/>
    <property type="evidence" value="ECO:0000266"/>
    <property type="project" value="RGD"/>
</dbReference>
<dbReference type="GO" id="GO:0070059">
    <property type="term" value="P:intrinsic apoptotic signaling pathway in response to endoplasmic reticulum stress"/>
    <property type="evidence" value="ECO:0000266"/>
    <property type="project" value="RGD"/>
</dbReference>
<dbReference type="GO" id="GO:0097421">
    <property type="term" value="P:liver regeneration"/>
    <property type="evidence" value="ECO:0000270"/>
    <property type="project" value="RGD"/>
</dbReference>
<dbReference type="CDD" id="cd02083">
    <property type="entry name" value="P-type_ATPase_SERCA"/>
    <property type="match status" value="1"/>
</dbReference>
<dbReference type="FunFam" id="3.40.1110.10:FF:000003">
    <property type="entry name" value="Calcium-transporting ATPase"/>
    <property type="match status" value="1"/>
</dbReference>
<dbReference type="FunFam" id="3.40.50.1000:FF:000005">
    <property type="entry name" value="Calcium-transporting ATPase 1"/>
    <property type="match status" value="1"/>
</dbReference>
<dbReference type="FunFam" id="1.20.1110.10:FF:000065">
    <property type="entry name" value="Sarcoplasmic/endoplasmic reticulum calcium ATPase 1"/>
    <property type="match status" value="3"/>
</dbReference>
<dbReference type="FunFam" id="2.70.150.10:FF:000160">
    <property type="entry name" value="Sarcoplasmic/endoplasmic reticulum calcium ATPase 1"/>
    <property type="match status" value="1"/>
</dbReference>
<dbReference type="Gene3D" id="3.40.1110.10">
    <property type="entry name" value="Calcium-transporting ATPase, cytoplasmic domain N"/>
    <property type="match status" value="1"/>
</dbReference>
<dbReference type="Gene3D" id="2.70.150.10">
    <property type="entry name" value="Calcium-transporting ATPase, cytoplasmic transduction domain A"/>
    <property type="match status" value="1"/>
</dbReference>
<dbReference type="Gene3D" id="1.20.1110.10">
    <property type="entry name" value="Calcium-transporting ATPase, transmembrane domain"/>
    <property type="match status" value="1"/>
</dbReference>
<dbReference type="Gene3D" id="3.40.50.1000">
    <property type="entry name" value="HAD superfamily/HAD-like"/>
    <property type="match status" value="1"/>
</dbReference>
<dbReference type="InterPro" id="IPR006068">
    <property type="entry name" value="ATPase_P-typ_cation-transptr_C"/>
</dbReference>
<dbReference type="InterPro" id="IPR004014">
    <property type="entry name" value="ATPase_P-typ_cation-transptr_N"/>
</dbReference>
<dbReference type="InterPro" id="IPR023299">
    <property type="entry name" value="ATPase_P-typ_cyto_dom_N"/>
</dbReference>
<dbReference type="InterPro" id="IPR018303">
    <property type="entry name" value="ATPase_P-typ_P_site"/>
</dbReference>
<dbReference type="InterPro" id="IPR023298">
    <property type="entry name" value="ATPase_P-typ_TM_dom_sf"/>
</dbReference>
<dbReference type="InterPro" id="IPR008250">
    <property type="entry name" value="ATPase_P-typ_transduc_dom_A_sf"/>
</dbReference>
<dbReference type="InterPro" id="IPR036412">
    <property type="entry name" value="HAD-like_sf"/>
</dbReference>
<dbReference type="InterPro" id="IPR023214">
    <property type="entry name" value="HAD_sf"/>
</dbReference>
<dbReference type="InterPro" id="IPR005782">
    <property type="entry name" value="P-type_ATPase_IIA"/>
</dbReference>
<dbReference type="InterPro" id="IPR001757">
    <property type="entry name" value="P_typ_ATPase"/>
</dbReference>
<dbReference type="InterPro" id="IPR044492">
    <property type="entry name" value="P_typ_ATPase_HD_dom"/>
</dbReference>
<dbReference type="NCBIfam" id="TIGR01116">
    <property type="entry name" value="ATPase-IIA1_Ca"/>
    <property type="match status" value="1"/>
</dbReference>
<dbReference type="NCBIfam" id="TIGR01494">
    <property type="entry name" value="ATPase_P-type"/>
    <property type="match status" value="2"/>
</dbReference>
<dbReference type="PANTHER" id="PTHR42861">
    <property type="entry name" value="CALCIUM-TRANSPORTING ATPASE"/>
    <property type="match status" value="1"/>
</dbReference>
<dbReference type="Pfam" id="PF13246">
    <property type="entry name" value="Cation_ATPase"/>
    <property type="match status" value="1"/>
</dbReference>
<dbReference type="Pfam" id="PF00689">
    <property type="entry name" value="Cation_ATPase_C"/>
    <property type="match status" value="1"/>
</dbReference>
<dbReference type="Pfam" id="PF00690">
    <property type="entry name" value="Cation_ATPase_N"/>
    <property type="match status" value="1"/>
</dbReference>
<dbReference type="Pfam" id="PF00122">
    <property type="entry name" value="E1-E2_ATPase"/>
    <property type="match status" value="1"/>
</dbReference>
<dbReference type="Pfam" id="PF00702">
    <property type="entry name" value="Hydrolase"/>
    <property type="match status" value="1"/>
</dbReference>
<dbReference type="PRINTS" id="PR00119">
    <property type="entry name" value="CATATPASE"/>
</dbReference>
<dbReference type="SFLD" id="SFLDG00002">
    <property type="entry name" value="C1.7:_P-type_atpase_like"/>
    <property type="match status" value="1"/>
</dbReference>
<dbReference type="SFLD" id="SFLDF00027">
    <property type="entry name" value="p-type_atpase"/>
    <property type="match status" value="1"/>
</dbReference>
<dbReference type="SMART" id="SM00831">
    <property type="entry name" value="Cation_ATPase_N"/>
    <property type="match status" value="1"/>
</dbReference>
<dbReference type="SUPFAM" id="SSF81653">
    <property type="entry name" value="Calcium ATPase, transduction domain A"/>
    <property type="match status" value="1"/>
</dbReference>
<dbReference type="SUPFAM" id="SSF81665">
    <property type="entry name" value="Calcium ATPase, transmembrane domain M"/>
    <property type="match status" value="1"/>
</dbReference>
<dbReference type="SUPFAM" id="SSF56784">
    <property type="entry name" value="HAD-like"/>
    <property type="match status" value="1"/>
</dbReference>
<dbReference type="SUPFAM" id="SSF81660">
    <property type="entry name" value="Metal cation-transporting ATPase, ATP-binding domain N"/>
    <property type="match status" value="1"/>
</dbReference>
<dbReference type="PROSITE" id="PS00154">
    <property type="entry name" value="ATPASE_E1_E2"/>
    <property type="match status" value="1"/>
</dbReference>
<protein>
    <recommendedName>
        <fullName>Sarcoplasmic/endoplasmic reticulum calcium ATPase 3</fullName>
        <shortName>SERCA3</shortName>
        <shortName>SR Ca(2+)-ATPase 3</shortName>
        <ecNumber>7.2.2.10</ecNumber>
    </recommendedName>
    <alternativeName>
        <fullName>Calcium pump 3</fullName>
    </alternativeName>
</protein>
<keyword id="KW-0007">Acetylation</keyword>
<keyword id="KW-0025">Alternative splicing</keyword>
<keyword id="KW-0067">ATP-binding</keyword>
<keyword id="KW-0106">Calcium</keyword>
<keyword id="KW-0109">Calcium transport</keyword>
<keyword id="KW-0256">Endoplasmic reticulum</keyword>
<keyword id="KW-0406">Ion transport</keyword>
<keyword id="KW-0460">Magnesium</keyword>
<keyword id="KW-0472">Membrane</keyword>
<keyword id="KW-0479">Metal-binding</keyword>
<keyword id="KW-0547">Nucleotide-binding</keyword>
<keyword id="KW-0597">Phosphoprotein</keyword>
<keyword id="KW-1185">Reference proteome</keyword>
<keyword id="KW-0703">Sarcoplasmic reticulum</keyword>
<keyword id="KW-1278">Translocase</keyword>
<keyword id="KW-0812">Transmembrane</keyword>
<keyword id="KW-1133">Transmembrane helix</keyword>
<keyword id="KW-0813">Transport</keyword>
<sequence length="999" mass="109359">MEEAHLLSAADVLRRFSVTAEGGLTLEQVTDARERYGPNELPTEEGKSLWELVVEQFEDLLVRILLLAALVSFVLAWFEEGEETTTAFVEPLVIMLILVANAIVGVWQERNAESAIEALKEYEPEMGKVIRSDRKGVQRIRARDIVPGDIVEVAVGDKVPADLRLIEIKSTTLRVDQSILTGESVSVTKHTDAIPDPRAVNQDKKNMLFSGTNIASGKALGVAVATGLHTELGKIRSQMAAVEPERTPLQRKLDEFGRQLSHAISVICVAVWVINIGHFADPAHGGSWLRGAVYYFKIAVALAVAAIPEGLPAVITTCLALGTRRMARKNAIVRSLPSVETLGCTSVICSDKTGTLTTNQMSVCRMFVVAEAEAGACRLHEFTISGTTYTPEGEVRQGEQLVRCGQFDGLVELATICALCNDSALDYNEAKGVYEKVGEATETALTCLVEKMNVFDTDLKGLSRVERAGACNSVIKQLMQKEFTLEFSRDRKSMSVYCTPTRADPKAQGSKMFVKGAPESVIERCSSVRVGSRTVPLSATSREHILAKIRDWGSGSHTLRCLALATRDTPPRKEDMQLDDCSQFVQYETGLTFVGCVGMLDPPRPEVAACITRCSRAGIRVVMITGDNKGTAVAICRRLGIFGDTEDVLGKAYTGREFDDLSPEQQRQACRTARCFARVEPAHKSRIVENLQSFNEITAMTGDGVNDAPALKKAEIGIAMGSGTAVAKSAAEMVLSDDNFASIVAAVEEGRAIYNNMKQFIRYLISSNVGEVVCIFLTAILGLPEALIPVQLLWVNLVTDGLPATALGFNPPDLDIMEKLPRNPREALISGWLFFRYLAIGVYVGLATVAAATWWFLYDAEGPQVTFHQLRNFLKCSEDNPLFAGIDCEVFESRFPTTMALSVLVTIEMCNALNSVSENQSLLRMPPWLNPWLLGAVVMSMALHFLILLVPPLPLIFQVTPLSGRQWGVVLQMSLPVILLDEALKYLSRHHVDEKKDLK</sequence>
<accession>P18596</accession>
<accession>Q8R5I9</accession>
<gene>
    <name type="primary">Atp2a3</name>
</gene>